<organism>
    <name type="scientific">Chlamydia caviae (strain ATCC VR-813 / DSM 19441 / 03DC25 / GPIC)</name>
    <name type="common">Chlamydophila caviae</name>
    <dbReference type="NCBI Taxonomy" id="227941"/>
    <lineage>
        <taxon>Bacteria</taxon>
        <taxon>Pseudomonadati</taxon>
        <taxon>Chlamydiota</taxon>
        <taxon>Chlamydiia</taxon>
        <taxon>Chlamydiales</taxon>
        <taxon>Chlamydiaceae</taxon>
        <taxon>Chlamydia/Chlamydophila group</taxon>
        <taxon>Chlamydia</taxon>
    </lineage>
</organism>
<evidence type="ECO:0000255" key="1">
    <source>
        <dbReference type="HAMAP-Rule" id="MF_00101"/>
    </source>
</evidence>
<sequence>MQTAHIGTDIIEISRIRKAIKAHSQRILNKIFTKREQEYCLSLTNPYPSFAARFAAKEAVAKALGTGIGKVVRWKDIEILKSSKHPEVYLPERVYKELGISKVLLSISHSREYATAVAVTLI</sequence>
<keyword id="KW-0963">Cytoplasm</keyword>
<keyword id="KW-0275">Fatty acid biosynthesis</keyword>
<keyword id="KW-0276">Fatty acid metabolism</keyword>
<keyword id="KW-0444">Lipid biosynthesis</keyword>
<keyword id="KW-0443">Lipid metabolism</keyword>
<keyword id="KW-0460">Magnesium</keyword>
<keyword id="KW-0479">Metal-binding</keyword>
<keyword id="KW-0808">Transferase</keyword>
<accession>Q820E7</accession>
<dbReference type="EC" id="2.7.8.7" evidence="1"/>
<dbReference type="EMBL" id="AE015925">
    <property type="protein sequence ID" value="AAP05214.1"/>
    <property type="molecule type" value="Genomic_DNA"/>
</dbReference>
<dbReference type="RefSeq" id="WP_011006430.1">
    <property type="nucleotide sequence ID" value="NC_003361.3"/>
</dbReference>
<dbReference type="SMR" id="Q820E7"/>
<dbReference type="STRING" id="227941.CCA_00469"/>
<dbReference type="KEGG" id="cca:CCA_00469"/>
<dbReference type="eggNOG" id="COG0736">
    <property type="taxonomic scope" value="Bacteria"/>
</dbReference>
<dbReference type="HOGENOM" id="CLU_089696_0_2_0"/>
<dbReference type="OrthoDB" id="517356at2"/>
<dbReference type="Proteomes" id="UP000002193">
    <property type="component" value="Chromosome"/>
</dbReference>
<dbReference type="GO" id="GO:0005737">
    <property type="term" value="C:cytoplasm"/>
    <property type="evidence" value="ECO:0007669"/>
    <property type="project" value="UniProtKB-SubCell"/>
</dbReference>
<dbReference type="GO" id="GO:0008897">
    <property type="term" value="F:holo-[acyl-carrier-protein] synthase activity"/>
    <property type="evidence" value="ECO:0007669"/>
    <property type="project" value="UniProtKB-UniRule"/>
</dbReference>
<dbReference type="GO" id="GO:0000287">
    <property type="term" value="F:magnesium ion binding"/>
    <property type="evidence" value="ECO:0007669"/>
    <property type="project" value="UniProtKB-UniRule"/>
</dbReference>
<dbReference type="GO" id="GO:0006633">
    <property type="term" value="P:fatty acid biosynthetic process"/>
    <property type="evidence" value="ECO:0007669"/>
    <property type="project" value="UniProtKB-UniRule"/>
</dbReference>
<dbReference type="Gene3D" id="3.90.470.20">
    <property type="entry name" value="4'-phosphopantetheinyl transferase domain"/>
    <property type="match status" value="1"/>
</dbReference>
<dbReference type="HAMAP" id="MF_00101">
    <property type="entry name" value="AcpS"/>
    <property type="match status" value="1"/>
</dbReference>
<dbReference type="InterPro" id="IPR008278">
    <property type="entry name" value="4-PPantetheinyl_Trfase_dom"/>
</dbReference>
<dbReference type="InterPro" id="IPR037143">
    <property type="entry name" value="4-PPantetheinyl_Trfase_dom_sf"/>
</dbReference>
<dbReference type="InterPro" id="IPR002582">
    <property type="entry name" value="ACPS"/>
</dbReference>
<dbReference type="InterPro" id="IPR004568">
    <property type="entry name" value="Ppantetheine-prot_Trfase_dom"/>
</dbReference>
<dbReference type="NCBIfam" id="TIGR00516">
    <property type="entry name" value="acpS"/>
    <property type="match status" value="1"/>
</dbReference>
<dbReference type="NCBIfam" id="TIGR00556">
    <property type="entry name" value="pantethn_trn"/>
    <property type="match status" value="1"/>
</dbReference>
<dbReference type="Pfam" id="PF01648">
    <property type="entry name" value="ACPS"/>
    <property type="match status" value="1"/>
</dbReference>
<dbReference type="SUPFAM" id="SSF56214">
    <property type="entry name" value="4'-phosphopantetheinyl transferase"/>
    <property type="match status" value="1"/>
</dbReference>
<protein>
    <recommendedName>
        <fullName evidence="1">Holo-[acyl-carrier-protein] synthase</fullName>
        <shortName evidence="1">Holo-ACP synthase</shortName>
        <ecNumber evidence="1">2.7.8.7</ecNumber>
    </recommendedName>
    <alternativeName>
        <fullName evidence="1">4'-phosphopantetheinyl transferase AcpS</fullName>
    </alternativeName>
</protein>
<proteinExistence type="inferred from homology"/>
<feature type="chain" id="PRO_0000175630" description="Holo-[acyl-carrier-protein] synthase">
    <location>
        <begin position="1"/>
        <end position="122"/>
    </location>
</feature>
<feature type="binding site" evidence="1">
    <location>
        <position position="9"/>
    </location>
    <ligand>
        <name>Mg(2+)</name>
        <dbReference type="ChEBI" id="CHEBI:18420"/>
    </ligand>
</feature>
<feature type="binding site" evidence="1">
    <location>
        <position position="58"/>
    </location>
    <ligand>
        <name>Mg(2+)</name>
        <dbReference type="ChEBI" id="CHEBI:18420"/>
    </ligand>
</feature>
<reference key="1">
    <citation type="journal article" date="2003" name="Nucleic Acids Res.">
        <title>Genome sequence of Chlamydophila caviae (Chlamydia psittaci GPIC): examining the role of niche-specific genes in the evolution of the Chlamydiaceae.</title>
        <authorList>
            <person name="Read T.D."/>
            <person name="Myers G.S.A."/>
            <person name="Brunham R.C."/>
            <person name="Nelson W.C."/>
            <person name="Paulsen I.T."/>
            <person name="Heidelberg J.F."/>
            <person name="Holtzapple E.K."/>
            <person name="Khouri H.M."/>
            <person name="Federova N.B."/>
            <person name="Carty H.A."/>
            <person name="Umayam L.A."/>
            <person name="Haft D.H."/>
            <person name="Peterson J.D."/>
            <person name="Beanan M.J."/>
            <person name="White O."/>
            <person name="Salzberg S.L."/>
            <person name="Hsia R.-C."/>
            <person name="McClarty G."/>
            <person name="Rank R.G."/>
            <person name="Bavoil P.M."/>
            <person name="Fraser C.M."/>
        </authorList>
    </citation>
    <scope>NUCLEOTIDE SEQUENCE [LARGE SCALE GENOMIC DNA]</scope>
    <source>
        <strain>ATCC VR-813 / DSM 19441 / 03DC25 / GPIC</strain>
    </source>
</reference>
<comment type="function">
    <text evidence="1">Transfers the 4'-phosphopantetheine moiety from coenzyme A to a Ser of acyl-carrier-protein.</text>
</comment>
<comment type="catalytic activity">
    <reaction evidence="1">
        <text>apo-[ACP] + CoA = holo-[ACP] + adenosine 3',5'-bisphosphate + H(+)</text>
        <dbReference type="Rhea" id="RHEA:12068"/>
        <dbReference type="Rhea" id="RHEA-COMP:9685"/>
        <dbReference type="Rhea" id="RHEA-COMP:9690"/>
        <dbReference type="ChEBI" id="CHEBI:15378"/>
        <dbReference type="ChEBI" id="CHEBI:29999"/>
        <dbReference type="ChEBI" id="CHEBI:57287"/>
        <dbReference type="ChEBI" id="CHEBI:58343"/>
        <dbReference type="ChEBI" id="CHEBI:64479"/>
        <dbReference type="EC" id="2.7.8.7"/>
    </reaction>
</comment>
<comment type="cofactor">
    <cofactor evidence="1">
        <name>Mg(2+)</name>
        <dbReference type="ChEBI" id="CHEBI:18420"/>
    </cofactor>
</comment>
<comment type="subcellular location">
    <subcellularLocation>
        <location evidence="1">Cytoplasm</location>
    </subcellularLocation>
</comment>
<comment type="similarity">
    <text evidence="1">Belongs to the P-Pant transferase superfamily. AcpS family.</text>
</comment>
<name>ACPS_CHLCV</name>
<gene>
    <name evidence="1" type="primary">acpS</name>
    <name type="ordered locus">CCA_00469</name>
</gene>